<protein>
    <recommendedName>
        <fullName evidence="1">Serine--tRNA ligase</fullName>
        <ecNumber evidence="1">6.1.1.11</ecNumber>
    </recommendedName>
    <alternativeName>
        <fullName evidence="1">Seryl-tRNA synthetase</fullName>
        <shortName evidence="1">SerRS</shortName>
    </alternativeName>
    <alternativeName>
        <fullName evidence="1">Seryl-tRNA(Ser/Sec) synthetase</fullName>
    </alternativeName>
</protein>
<proteinExistence type="inferred from homology"/>
<comment type="function">
    <text evidence="1">Catalyzes the attachment of serine to tRNA(Ser). Is also able to aminoacylate tRNA(Sec) with serine, to form the misacylated tRNA L-seryl-tRNA(Sec), which will be further converted into selenocysteinyl-tRNA(Sec).</text>
</comment>
<comment type="catalytic activity">
    <reaction evidence="1">
        <text>tRNA(Ser) + L-serine + ATP = L-seryl-tRNA(Ser) + AMP + diphosphate + H(+)</text>
        <dbReference type="Rhea" id="RHEA:12292"/>
        <dbReference type="Rhea" id="RHEA-COMP:9669"/>
        <dbReference type="Rhea" id="RHEA-COMP:9703"/>
        <dbReference type="ChEBI" id="CHEBI:15378"/>
        <dbReference type="ChEBI" id="CHEBI:30616"/>
        <dbReference type="ChEBI" id="CHEBI:33019"/>
        <dbReference type="ChEBI" id="CHEBI:33384"/>
        <dbReference type="ChEBI" id="CHEBI:78442"/>
        <dbReference type="ChEBI" id="CHEBI:78533"/>
        <dbReference type="ChEBI" id="CHEBI:456215"/>
        <dbReference type="EC" id="6.1.1.11"/>
    </reaction>
</comment>
<comment type="catalytic activity">
    <reaction evidence="1">
        <text>tRNA(Sec) + L-serine + ATP = L-seryl-tRNA(Sec) + AMP + diphosphate + H(+)</text>
        <dbReference type="Rhea" id="RHEA:42580"/>
        <dbReference type="Rhea" id="RHEA-COMP:9742"/>
        <dbReference type="Rhea" id="RHEA-COMP:10128"/>
        <dbReference type="ChEBI" id="CHEBI:15378"/>
        <dbReference type="ChEBI" id="CHEBI:30616"/>
        <dbReference type="ChEBI" id="CHEBI:33019"/>
        <dbReference type="ChEBI" id="CHEBI:33384"/>
        <dbReference type="ChEBI" id="CHEBI:78442"/>
        <dbReference type="ChEBI" id="CHEBI:78533"/>
        <dbReference type="ChEBI" id="CHEBI:456215"/>
        <dbReference type="EC" id="6.1.1.11"/>
    </reaction>
</comment>
<comment type="pathway">
    <text evidence="1">Aminoacyl-tRNA biosynthesis; selenocysteinyl-tRNA(Sec) biosynthesis; L-seryl-tRNA(Sec) from L-serine and tRNA(Sec): step 1/1.</text>
</comment>
<comment type="subunit">
    <text evidence="1">Homodimer. The tRNA molecule binds across the dimer.</text>
</comment>
<comment type="subcellular location">
    <subcellularLocation>
        <location evidence="1">Cytoplasm</location>
    </subcellularLocation>
</comment>
<comment type="domain">
    <text evidence="1">Consists of two distinct domains, a catalytic core and a N-terminal extension that is involved in tRNA binding.</text>
</comment>
<comment type="similarity">
    <text evidence="1">Belongs to the class-II aminoacyl-tRNA synthetase family. Type-1 seryl-tRNA synthetase subfamily.</text>
</comment>
<feature type="chain" id="PRO_1000019760" description="Serine--tRNA ligase">
    <location>
        <begin position="1"/>
        <end position="422"/>
    </location>
</feature>
<feature type="binding site" evidence="1">
    <location>
        <begin position="229"/>
        <end position="231"/>
    </location>
    <ligand>
        <name>L-serine</name>
        <dbReference type="ChEBI" id="CHEBI:33384"/>
    </ligand>
</feature>
<feature type="binding site" evidence="1">
    <location>
        <begin position="260"/>
        <end position="262"/>
    </location>
    <ligand>
        <name>ATP</name>
        <dbReference type="ChEBI" id="CHEBI:30616"/>
    </ligand>
</feature>
<feature type="binding site" evidence="1">
    <location>
        <position position="283"/>
    </location>
    <ligand>
        <name>L-serine</name>
        <dbReference type="ChEBI" id="CHEBI:33384"/>
    </ligand>
</feature>
<feature type="binding site" evidence="1">
    <location>
        <begin position="347"/>
        <end position="350"/>
    </location>
    <ligand>
        <name>ATP</name>
        <dbReference type="ChEBI" id="CHEBI:30616"/>
    </ligand>
</feature>
<feature type="binding site" evidence="1">
    <location>
        <position position="383"/>
    </location>
    <ligand>
        <name>L-serine</name>
        <dbReference type="ChEBI" id="CHEBI:33384"/>
    </ligand>
</feature>
<accession>A1ALM7</accession>
<organism>
    <name type="scientific">Pelobacter propionicus (strain DSM 2379 / NBRC 103807 / OttBd1)</name>
    <dbReference type="NCBI Taxonomy" id="338966"/>
    <lineage>
        <taxon>Bacteria</taxon>
        <taxon>Pseudomonadati</taxon>
        <taxon>Thermodesulfobacteriota</taxon>
        <taxon>Desulfuromonadia</taxon>
        <taxon>Desulfuromonadales</taxon>
        <taxon>Desulfuromonadaceae</taxon>
        <taxon>Pelobacter</taxon>
    </lineage>
</organism>
<dbReference type="EC" id="6.1.1.11" evidence="1"/>
<dbReference type="EMBL" id="CP000482">
    <property type="protein sequence ID" value="ABK98247.1"/>
    <property type="molecule type" value="Genomic_DNA"/>
</dbReference>
<dbReference type="RefSeq" id="WP_011734560.1">
    <property type="nucleotide sequence ID" value="NC_008609.1"/>
</dbReference>
<dbReference type="SMR" id="A1ALM7"/>
<dbReference type="STRING" id="338966.Ppro_0616"/>
<dbReference type="KEGG" id="ppd:Ppro_0616"/>
<dbReference type="eggNOG" id="COG0172">
    <property type="taxonomic scope" value="Bacteria"/>
</dbReference>
<dbReference type="HOGENOM" id="CLU_023797_1_1_7"/>
<dbReference type="OrthoDB" id="9804647at2"/>
<dbReference type="UniPathway" id="UPA00906">
    <property type="reaction ID" value="UER00895"/>
</dbReference>
<dbReference type="Proteomes" id="UP000006732">
    <property type="component" value="Chromosome"/>
</dbReference>
<dbReference type="GO" id="GO:0005737">
    <property type="term" value="C:cytoplasm"/>
    <property type="evidence" value="ECO:0007669"/>
    <property type="project" value="UniProtKB-SubCell"/>
</dbReference>
<dbReference type="GO" id="GO:0005524">
    <property type="term" value="F:ATP binding"/>
    <property type="evidence" value="ECO:0007669"/>
    <property type="project" value="UniProtKB-UniRule"/>
</dbReference>
<dbReference type="GO" id="GO:0004828">
    <property type="term" value="F:serine-tRNA ligase activity"/>
    <property type="evidence" value="ECO:0007669"/>
    <property type="project" value="UniProtKB-UniRule"/>
</dbReference>
<dbReference type="GO" id="GO:0016260">
    <property type="term" value="P:selenocysteine biosynthetic process"/>
    <property type="evidence" value="ECO:0007669"/>
    <property type="project" value="UniProtKB-UniRule"/>
</dbReference>
<dbReference type="GO" id="GO:0006434">
    <property type="term" value="P:seryl-tRNA aminoacylation"/>
    <property type="evidence" value="ECO:0007669"/>
    <property type="project" value="UniProtKB-UniRule"/>
</dbReference>
<dbReference type="CDD" id="cd00770">
    <property type="entry name" value="SerRS_core"/>
    <property type="match status" value="1"/>
</dbReference>
<dbReference type="Gene3D" id="3.30.930.10">
    <property type="entry name" value="Bira Bifunctional Protein, Domain 2"/>
    <property type="match status" value="1"/>
</dbReference>
<dbReference type="Gene3D" id="1.10.287.40">
    <property type="entry name" value="Serine-tRNA synthetase, tRNA binding domain"/>
    <property type="match status" value="1"/>
</dbReference>
<dbReference type="HAMAP" id="MF_00176">
    <property type="entry name" value="Ser_tRNA_synth_type1"/>
    <property type="match status" value="1"/>
</dbReference>
<dbReference type="InterPro" id="IPR002314">
    <property type="entry name" value="aa-tRNA-synt_IIb"/>
</dbReference>
<dbReference type="InterPro" id="IPR006195">
    <property type="entry name" value="aa-tRNA-synth_II"/>
</dbReference>
<dbReference type="InterPro" id="IPR045864">
    <property type="entry name" value="aa-tRNA-synth_II/BPL/LPL"/>
</dbReference>
<dbReference type="InterPro" id="IPR002317">
    <property type="entry name" value="Ser-tRNA-ligase_type_1"/>
</dbReference>
<dbReference type="InterPro" id="IPR015866">
    <property type="entry name" value="Ser-tRNA-synth_1_N"/>
</dbReference>
<dbReference type="InterPro" id="IPR042103">
    <property type="entry name" value="SerRS_1_N_sf"/>
</dbReference>
<dbReference type="InterPro" id="IPR033729">
    <property type="entry name" value="SerRS_core"/>
</dbReference>
<dbReference type="InterPro" id="IPR010978">
    <property type="entry name" value="tRNA-bd_arm"/>
</dbReference>
<dbReference type="NCBIfam" id="TIGR00414">
    <property type="entry name" value="serS"/>
    <property type="match status" value="1"/>
</dbReference>
<dbReference type="PANTHER" id="PTHR43697:SF1">
    <property type="entry name" value="SERINE--TRNA LIGASE"/>
    <property type="match status" value="1"/>
</dbReference>
<dbReference type="PANTHER" id="PTHR43697">
    <property type="entry name" value="SERYL-TRNA SYNTHETASE"/>
    <property type="match status" value="1"/>
</dbReference>
<dbReference type="Pfam" id="PF02403">
    <property type="entry name" value="Seryl_tRNA_N"/>
    <property type="match status" value="1"/>
</dbReference>
<dbReference type="Pfam" id="PF00587">
    <property type="entry name" value="tRNA-synt_2b"/>
    <property type="match status" value="1"/>
</dbReference>
<dbReference type="PIRSF" id="PIRSF001529">
    <property type="entry name" value="Ser-tRNA-synth_IIa"/>
    <property type="match status" value="1"/>
</dbReference>
<dbReference type="PRINTS" id="PR00981">
    <property type="entry name" value="TRNASYNTHSER"/>
</dbReference>
<dbReference type="SUPFAM" id="SSF55681">
    <property type="entry name" value="Class II aaRS and biotin synthetases"/>
    <property type="match status" value="1"/>
</dbReference>
<dbReference type="SUPFAM" id="SSF46589">
    <property type="entry name" value="tRNA-binding arm"/>
    <property type="match status" value="1"/>
</dbReference>
<dbReference type="PROSITE" id="PS50862">
    <property type="entry name" value="AA_TRNA_LIGASE_II"/>
    <property type="match status" value="1"/>
</dbReference>
<evidence type="ECO:0000255" key="1">
    <source>
        <dbReference type="HAMAP-Rule" id="MF_00176"/>
    </source>
</evidence>
<sequence>MLDMKFIRENIDETERRLATRGESCTLGGFRELDQKRLALLKESEALKALRNSVSDEIARIKDKSQAQDKILQMREVSQKIKGMDDELKQVDEALQGILLTVPNLPDPATPVGKSENDNVEIRKWGTPGSYGFTPKPHWEIGEELGILDFECGAKLTGARFTLSRGAGARMERALISFMLDLHTASHGYLEVLPPFMVNRDSMTGTGQLPKFEEDLFKMTDPEYFLIPTAEVPVTNIHRGEILKKSDLPIRYAAYTPCFRREAGSYGKDTRGLIRQHQFNKVELVKFSHPSQSAEELEKLTADAEKVLQLLELPYRVMALCSADIGFSAARTYDLEVWLPGQNCYREISSCSCFGDFQARRANIRFREEEKSKPEFVHTLNGSGLAVGRTLVAILENYQQEDGSVVIPQALRPYMGGLERIQ</sequence>
<keyword id="KW-0030">Aminoacyl-tRNA synthetase</keyword>
<keyword id="KW-0067">ATP-binding</keyword>
<keyword id="KW-0963">Cytoplasm</keyword>
<keyword id="KW-0436">Ligase</keyword>
<keyword id="KW-0547">Nucleotide-binding</keyword>
<keyword id="KW-0648">Protein biosynthesis</keyword>
<keyword id="KW-1185">Reference proteome</keyword>
<name>SYS_PELPD</name>
<gene>
    <name evidence="1" type="primary">serS</name>
    <name type="ordered locus">Ppro_0616</name>
</gene>
<reference key="1">
    <citation type="submission" date="2006-10" db="EMBL/GenBank/DDBJ databases">
        <title>Complete sequence of chromosome of Pelobacter propionicus DSM 2379.</title>
        <authorList>
            <consortium name="US DOE Joint Genome Institute"/>
            <person name="Copeland A."/>
            <person name="Lucas S."/>
            <person name="Lapidus A."/>
            <person name="Barry K."/>
            <person name="Detter J.C."/>
            <person name="Glavina del Rio T."/>
            <person name="Hammon N."/>
            <person name="Israni S."/>
            <person name="Dalin E."/>
            <person name="Tice H."/>
            <person name="Pitluck S."/>
            <person name="Saunders E."/>
            <person name="Brettin T."/>
            <person name="Bruce D."/>
            <person name="Han C."/>
            <person name="Tapia R."/>
            <person name="Schmutz J."/>
            <person name="Larimer F."/>
            <person name="Land M."/>
            <person name="Hauser L."/>
            <person name="Kyrpides N."/>
            <person name="Kim E."/>
            <person name="Lovley D."/>
            <person name="Richardson P."/>
        </authorList>
    </citation>
    <scope>NUCLEOTIDE SEQUENCE [LARGE SCALE GENOMIC DNA]</scope>
    <source>
        <strain>DSM 2379 / NBRC 103807 / OttBd1</strain>
    </source>
</reference>